<keyword id="KW-0004">4Fe-4S</keyword>
<keyword id="KW-0997">Cell inner membrane</keyword>
<keyword id="KW-1003">Cell membrane</keyword>
<keyword id="KW-0408">Iron</keyword>
<keyword id="KW-0411">Iron-sulfur</keyword>
<keyword id="KW-0472">Membrane</keyword>
<keyword id="KW-0479">Metal-binding</keyword>
<keyword id="KW-0520">NAD</keyword>
<keyword id="KW-0874">Quinone</keyword>
<keyword id="KW-1278">Translocase</keyword>
<keyword id="KW-0813">Transport</keyword>
<dbReference type="EC" id="7.1.1.-" evidence="1"/>
<dbReference type="EMBL" id="CP001108">
    <property type="protein sequence ID" value="ACF45889.1"/>
    <property type="molecule type" value="Genomic_DNA"/>
</dbReference>
<dbReference type="RefSeq" id="WP_012505426.1">
    <property type="nucleotide sequence ID" value="NC_011059.1"/>
</dbReference>
<dbReference type="SMR" id="B4S752"/>
<dbReference type="STRING" id="290512.Paes_0843"/>
<dbReference type="KEGG" id="paa:Paes_0843"/>
<dbReference type="eggNOG" id="COG0377">
    <property type="taxonomic scope" value="Bacteria"/>
</dbReference>
<dbReference type="HOGENOM" id="CLU_055737_7_3_10"/>
<dbReference type="Proteomes" id="UP000002725">
    <property type="component" value="Chromosome"/>
</dbReference>
<dbReference type="GO" id="GO:0005886">
    <property type="term" value="C:plasma membrane"/>
    <property type="evidence" value="ECO:0007669"/>
    <property type="project" value="UniProtKB-SubCell"/>
</dbReference>
<dbReference type="GO" id="GO:0045271">
    <property type="term" value="C:respiratory chain complex I"/>
    <property type="evidence" value="ECO:0007669"/>
    <property type="project" value="TreeGrafter"/>
</dbReference>
<dbReference type="GO" id="GO:0051539">
    <property type="term" value="F:4 iron, 4 sulfur cluster binding"/>
    <property type="evidence" value="ECO:0007669"/>
    <property type="project" value="UniProtKB-KW"/>
</dbReference>
<dbReference type="GO" id="GO:0005506">
    <property type="term" value="F:iron ion binding"/>
    <property type="evidence" value="ECO:0007669"/>
    <property type="project" value="UniProtKB-UniRule"/>
</dbReference>
<dbReference type="GO" id="GO:0008137">
    <property type="term" value="F:NADH dehydrogenase (ubiquinone) activity"/>
    <property type="evidence" value="ECO:0007669"/>
    <property type="project" value="InterPro"/>
</dbReference>
<dbReference type="GO" id="GO:0050136">
    <property type="term" value="F:NADH:ubiquinone reductase (non-electrogenic) activity"/>
    <property type="evidence" value="ECO:0007669"/>
    <property type="project" value="UniProtKB-UniRule"/>
</dbReference>
<dbReference type="GO" id="GO:0048038">
    <property type="term" value="F:quinone binding"/>
    <property type="evidence" value="ECO:0007669"/>
    <property type="project" value="UniProtKB-KW"/>
</dbReference>
<dbReference type="GO" id="GO:0009060">
    <property type="term" value="P:aerobic respiration"/>
    <property type="evidence" value="ECO:0007669"/>
    <property type="project" value="TreeGrafter"/>
</dbReference>
<dbReference type="GO" id="GO:0015990">
    <property type="term" value="P:electron transport coupled proton transport"/>
    <property type="evidence" value="ECO:0007669"/>
    <property type="project" value="TreeGrafter"/>
</dbReference>
<dbReference type="FunFam" id="3.40.50.12280:FF:000002">
    <property type="entry name" value="NADH-quinone oxidoreductase subunit B"/>
    <property type="match status" value="1"/>
</dbReference>
<dbReference type="Gene3D" id="3.40.50.12280">
    <property type="match status" value="1"/>
</dbReference>
<dbReference type="HAMAP" id="MF_01356">
    <property type="entry name" value="NDH1_NuoB"/>
    <property type="match status" value="1"/>
</dbReference>
<dbReference type="InterPro" id="IPR006137">
    <property type="entry name" value="NADH_UbQ_OxRdtase-like_20kDa"/>
</dbReference>
<dbReference type="InterPro" id="IPR006138">
    <property type="entry name" value="NADH_UQ_OxRdtase_20Kd_su"/>
</dbReference>
<dbReference type="NCBIfam" id="TIGR01957">
    <property type="entry name" value="nuoB_fam"/>
    <property type="match status" value="1"/>
</dbReference>
<dbReference type="NCBIfam" id="NF005012">
    <property type="entry name" value="PRK06411.1"/>
    <property type="match status" value="1"/>
</dbReference>
<dbReference type="NCBIfam" id="NF011388">
    <property type="entry name" value="PRK14813.1"/>
    <property type="match status" value="1"/>
</dbReference>
<dbReference type="PANTHER" id="PTHR11995">
    <property type="entry name" value="NADH DEHYDROGENASE"/>
    <property type="match status" value="1"/>
</dbReference>
<dbReference type="PANTHER" id="PTHR11995:SF33">
    <property type="entry name" value="NADH-QUINONE OXIDOREDUCTASE SUBUNIT B 2"/>
    <property type="match status" value="1"/>
</dbReference>
<dbReference type="Pfam" id="PF01058">
    <property type="entry name" value="Oxidored_q6"/>
    <property type="match status" value="1"/>
</dbReference>
<dbReference type="SUPFAM" id="SSF56770">
    <property type="entry name" value="HydA/Nqo6-like"/>
    <property type="match status" value="1"/>
</dbReference>
<dbReference type="PROSITE" id="PS01150">
    <property type="entry name" value="COMPLEX1_20K"/>
    <property type="match status" value="1"/>
</dbReference>
<reference key="1">
    <citation type="submission" date="2008-06" db="EMBL/GenBank/DDBJ databases">
        <title>Complete sequence of chromosome of Prosthecochloris aestuarii DSM 271.</title>
        <authorList>
            <consortium name="US DOE Joint Genome Institute"/>
            <person name="Lucas S."/>
            <person name="Copeland A."/>
            <person name="Lapidus A."/>
            <person name="Glavina del Rio T."/>
            <person name="Dalin E."/>
            <person name="Tice H."/>
            <person name="Bruce D."/>
            <person name="Goodwin L."/>
            <person name="Pitluck S."/>
            <person name="Schmutz J."/>
            <person name="Larimer F."/>
            <person name="Land M."/>
            <person name="Hauser L."/>
            <person name="Kyrpides N."/>
            <person name="Anderson I."/>
            <person name="Liu Z."/>
            <person name="Li T."/>
            <person name="Zhao F."/>
            <person name="Overmann J."/>
            <person name="Bryant D.A."/>
            <person name="Richardson P."/>
        </authorList>
    </citation>
    <scope>NUCLEOTIDE SEQUENCE [LARGE SCALE GENOMIC DNA]</scope>
    <source>
        <strain>DSM 271 / SK 413</strain>
    </source>
</reference>
<organism>
    <name type="scientific">Prosthecochloris aestuarii (strain DSM 271 / SK 413)</name>
    <dbReference type="NCBI Taxonomy" id="290512"/>
    <lineage>
        <taxon>Bacteria</taxon>
        <taxon>Pseudomonadati</taxon>
        <taxon>Chlorobiota</taxon>
        <taxon>Chlorobiia</taxon>
        <taxon>Chlorobiales</taxon>
        <taxon>Chlorobiaceae</taxon>
        <taxon>Prosthecochloris</taxon>
    </lineage>
</organism>
<gene>
    <name evidence="1" type="primary">nuoB</name>
    <name type="ordered locus">Paes_0843</name>
</gene>
<sequence length="190" mass="21168">MGLLDAKISNHNVLVTSVDNVLNWARLSSLWPMGFGLACCAIEMMATNASNYDLERFGIFPRSSPRQSDLMIVAGTVTMKMAERVIRLYEQMPEPRYVLSMGSCSNCGGPYWKHGYHVLKGVDRIIPVDVYVPGCPPRPEALIGGLMKVQELIRMEQIGISRAEALKKLEEKSFDPGIVLEHQRKSQAVS</sequence>
<name>NUOB_PROA2</name>
<protein>
    <recommendedName>
        <fullName evidence="1">NADH-quinone oxidoreductase subunit B</fullName>
        <ecNumber evidence="1">7.1.1.-</ecNumber>
    </recommendedName>
    <alternativeName>
        <fullName evidence="1">NADH dehydrogenase I subunit B</fullName>
    </alternativeName>
    <alternativeName>
        <fullName evidence="1">NDH-1 subunit B</fullName>
    </alternativeName>
</protein>
<proteinExistence type="inferred from homology"/>
<feature type="chain" id="PRO_0000376304" description="NADH-quinone oxidoreductase subunit B">
    <location>
        <begin position="1"/>
        <end position="190"/>
    </location>
</feature>
<feature type="binding site" evidence="1">
    <location>
        <position position="39"/>
    </location>
    <ligand>
        <name>[4Fe-4S] cluster</name>
        <dbReference type="ChEBI" id="CHEBI:49883"/>
    </ligand>
</feature>
<feature type="binding site" evidence="1">
    <location>
        <position position="40"/>
    </location>
    <ligand>
        <name>[4Fe-4S] cluster</name>
        <dbReference type="ChEBI" id="CHEBI:49883"/>
    </ligand>
</feature>
<feature type="binding site" evidence="1">
    <location>
        <position position="104"/>
    </location>
    <ligand>
        <name>[4Fe-4S] cluster</name>
        <dbReference type="ChEBI" id="CHEBI:49883"/>
    </ligand>
</feature>
<feature type="binding site" evidence="1">
    <location>
        <position position="135"/>
    </location>
    <ligand>
        <name>[4Fe-4S] cluster</name>
        <dbReference type="ChEBI" id="CHEBI:49883"/>
    </ligand>
</feature>
<comment type="function">
    <text evidence="1">NDH-1 shuttles electrons from NADH, via FMN and iron-sulfur (Fe-S) centers, to quinones in the respiratory chain. The immediate electron acceptor for the enzyme in this species is believed to be a menaquinone. Couples the redox reaction to proton translocation (for every two electrons transferred, four hydrogen ions are translocated across the cytoplasmic membrane), and thus conserves the redox energy in a proton gradient.</text>
</comment>
<comment type="catalytic activity">
    <reaction evidence="1">
        <text>a quinone + NADH + 5 H(+)(in) = a quinol + NAD(+) + 4 H(+)(out)</text>
        <dbReference type="Rhea" id="RHEA:57888"/>
        <dbReference type="ChEBI" id="CHEBI:15378"/>
        <dbReference type="ChEBI" id="CHEBI:24646"/>
        <dbReference type="ChEBI" id="CHEBI:57540"/>
        <dbReference type="ChEBI" id="CHEBI:57945"/>
        <dbReference type="ChEBI" id="CHEBI:132124"/>
    </reaction>
</comment>
<comment type="cofactor">
    <cofactor evidence="1">
        <name>[4Fe-4S] cluster</name>
        <dbReference type="ChEBI" id="CHEBI:49883"/>
    </cofactor>
    <text evidence="1">Binds 1 [4Fe-4S] cluster.</text>
</comment>
<comment type="subunit">
    <text evidence="1">NDH-1 is composed of 14 different subunits. Subunits NuoB, C, D, E, F, and G constitute the peripheral sector of the complex.</text>
</comment>
<comment type="subcellular location">
    <subcellularLocation>
        <location evidence="1">Cell inner membrane</location>
        <topology evidence="1">Peripheral membrane protein</topology>
        <orientation evidence="1">Cytoplasmic side</orientation>
    </subcellularLocation>
</comment>
<comment type="similarity">
    <text evidence="1">Belongs to the complex I 20 kDa subunit family.</text>
</comment>
<accession>B4S752</accession>
<evidence type="ECO:0000255" key="1">
    <source>
        <dbReference type="HAMAP-Rule" id="MF_01356"/>
    </source>
</evidence>